<evidence type="ECO:0000255" key="1">
    <source>
        <dbReference type="HAMAP-Rule" id="MF_00227"/>
    </source>
</evidence>
<comment type="function">
    <text evidence="1">RNaseP catalyzes the removal of the 5'-leader sequence from pre-tRNA to produce the mature 5'-terminus. It can also cleave other RNA substrates such as 4.5S RNA. The protein component plays an auxiliary but essential role in vivo by binding to the 5'-leader sequence and broadening the substrate specificity of the ribozyme.</text>
</comment>
<comment type="catalytic activity">
    <reaction evidence="1">
        <text>Endonucleolytic cleavage of RNA, removing 5'-extranucleotides from tRNA precursor.</text>
        <dbReference type="EC" id="3.1.26.5"/>
    </reaction>
</comment>
<comment type="subunit">
    <text evidence="1">Consists of a catalytic RNA component (M1 or rnpB) and a protein subunit.</text>
</comment>
<comment type="similarity">
    <text evidence="1">Belongs to the RnpA family.</text>
</comment>
<dbReference type="EC" id="3.1.26.5" evidence="1"/>
<dbReference type="EMBL" id="AL596174">
    <property type="protein sequence ID" value="CAC98212.1"/>
    <property type="molecule type" value="Genomic_DNA"/>
</dbReference>
<dbReference type="PIR" id="AD1805">
    <property type="entry name" value="AD1805"/>
</dbReference>
<dbReference type="RefSeq" id="WP_003759421.1">
    <property type="nucleotide sequence ID" value="NC_003212.1"/>
</dbReference>
<dbReference type="SMR" id="Q926Q4"/>
<dbReference type="STRING" id="272626.gene:17567374"/>
<dbReference type="KEGG" id="lin:rnpA"/>
<dbReference type="eggNOG" id="COG0594">
    <property type="taxonomic scope" value="Bacteria"/>
</dbReference>
<dbReference type="HOGENOM" id="CLU_117179_9_1_9"/>
<dbReference type="OrthoDB" id="9810867at2"/>
<dbReference type="Proteomes" id="UP000002513">
    <property type="component" value="Chromosome"/>
</dbReference>
<dbReference type="GO" id="GO:0030677">
    <property type="term" value="C:ribonuclease P complex"/>
    <property type="evidence" value="ECO:0007669"/>
    <property type="project" value="TreeGrafter"/>
</dbReference>
<dbReference type="GO" id="GO:0042781">
    <property type="term" value="F:3'-tRNA processing endoribonuclease activity"/>
    <property type="evidence" value="ECO:0007669"/>
    <property type="project" value="TreeGrafter"/>
</dbReference>
<dbReference type="GO" id="GO:0004526">
    <property type="term" value="F:ribonuclease P activity"/>
    <property type="evidence" value="ECO:0007669"/>
    <property type="project" value="UniProtKB-UniRule"/>
</dbReference>
<dbReference type="GO" id="GO:0000049">
    <property type="term" value="F:tRNA binding"/>
    <property type="evidence" value="ECO:0007669"/>
    <property type="project" value="UniProtKB-UniRule"/>
</dbReference>
<dbReference type="GO" id="GO:0001682">
    <property type="term" value="P:tRNA 5'-leader removal"/>
    <property type="evidence" value="ECO:0007669"/>
    <property type="project" value="UniProtKB-UniRule"/>
</dbReference>
<dbReference type="FunFam" id="3.30.230.10:FF:000021">
    <property type="entry name" value="Ribonuclease P protein component"/>
    <property type="match status" value="1"/>
</dbReference>
<dbReference type="Gene3D" id="3.30.230.10">
    <property type="match status" value="1"/>
</dbReference>
<dbReference type="HAMAP" id="MF_00227">
    <property type="entry name" value="RNase_P"/>
    <property type="match status" value="1"/>
</dbReference>
<dbReference type="InterPro" id="IPR020568">
    <property type="entry name" value="Ribosomal_Su5_D2-typ_SF"/>
</dbReference>
<dbReference type="InterPro" id="IPR014721">
    <property type="entry name" value="Ribsml_uS5_D2-typ_fold_subgr"/>
</dbReference>
<dbReference type="InterPro" id="IPR000100">
    <property type="entry name" value="RNase_P"/>
</dbReference>
<dbReference type="InterPro" id="IPR020539">
    <property type="entry name" value="RNase_P_CS"/>
</dbReference>
<dbReference type="NCBIfam" id="TIGR00188">
    <property type="entry name" value="rnpA"/>
    <property type="match status" value="1"/>
</dbReference>
<dbReference type="PANTHER" id="PTHR33992">
    <property type="entry name" value="RIBONUCLEASE P PROTEIN COMPONENT"/>
    <property type="match status" value="1"/>
</dbReference>
<dbReference type="PANTHER" id="PTHR33992:SF1">
    <property type="entry name" value="RIBONUCLEASE P PROTEIN COMPONENT"/>
    <property type="match status" value="1"/>
</dbReference>
<dbReference type="Pfam" id="PF00825">
    <property type="entry name" value="Ribonuclease_P"/>
    <property type="match status" value="1"/>
</dbReference>
<dbReference type="SUPFAM" id="SSF54211">
    <property type="entry name" value="Ribosomal protein S5 domain 2-like"/>
    <property type="match status" value="1"/>
</dbReference>
<dbReference type="PROSITE" id="PS00648">
    <property type="entry name" value="RIBONUCLEASE_P"/>
    <property type="match status" value="1"/>
</dbReference>
<sequence>MKKKYRIKKNDDFQKVFRRGKSFANRQFVVYTLKQEEASHFRIGLSVSKKIGNAVCRNRIKRYIRQSFHELESQINPENEYIIIARKPAANMDFHEVKKSLIHVLKVGRVLKQKPNNSK</sequence>
<proteinExistence type="inferred from homology"/>
<name>RNPA_LISIN</name>
<gene>
    <name evidence="1" type="primary">rnpA</name>
    <name type="ordered locus">lin2987</name>
</gene>
<protein>
    <recommendedName>
        <fullName evidence="1">Ribonuclease P protein component</fullName>
        <shortName evidence="1">RNase P protein</shortName>
        <shortName evidence="1">RNaseP protein</shortName>
        <ecNumber evidence="1">3.1.26.5</ecNumber>
    </recommendedName>
    <alternativeName>
        <fullName evidence="1">Protein C5</fullName>
    </alternativeName>
</protein>
<organism>
    <name type="scientific">Listeria innocua serovar 6a (strain ATCC BAA-680 / CLIP 11262)</name>
    <dbReference type="NCBI Taxonomy" id="272626"/>
    <lineage>
        <taxon>Bacteria</taxon>
        <taxon>Bacillati</taxon>
        <taxon>Bacillota</taxon>
        <taxon>Bacilli</taxon>
        <taxon>Bacillales</taxon>
        <taxon>Listeriaceae</taxon>
        <taxon>Listeria</taxon>
    </lineage>
</organism>
<reference key="1">
    <citation type="journal article" date="2001" name="Science">
        <title>Comparative genomics of Listeria species.</title>
        <authorList>
            <person name="Glaser P."/>
            <person name="Frangeul L."/>
            <person name="Buchrieser C."/>
            <person name="Rusniok C."/>
            <person name="Amend A."/>
            <person name="Baquero F."/>
            <person name="Berche P."/>
            <person name="Bloecker H."/>
            <person name="Brandt P."/>
            <person name="Chakraborty T."/>
            <person name="Charbit A."/>
            <person name="Chetouani F."/>
            <person name="Couve E."/>
            <person name="de Daruvar A."/>
            <person name="Dehoux P."/>
            <person name="Domann E."/>
            <person name="Dominguez-Bernal G."/>
            <person name="Duchaud E."/>
            <person name="Durant L."/>
            <person name="Dussurget O."/>
            <person name="Entian K.-D."/>
            <person name="Fsihi H."/>
            <person name="Garcia-del Portillo F."/>
            <person name="Garrido P."/>
            <person name="Gautier L."/>
            <person name="Goebel W."/>
            <person name="Gomez-Lopez N."/>
            <person name="Hain T."/>
            <person name="Hauf J."/>
            <person name="Jackson D."/>
            <person name="Jones L.-M."/>
            <person name="Kaerst U."/>
            <person name="Kreft J."/>
            <person name="Kuhn M."/>
            <person name="Kunst F."/>
            <person name="Kurapkat G."/>
            <person name="Madueno E."/>
            <person name="Maitournam A."/>
            <person name="Mata Vicente J."/>
            <person name="Ng E."/>
            <person name="Nedjari H."/>
            <person name="Nordsiek G."/>
            <person name="Novella S."/>
            <person name="de Pablos B."/>
            <person name="Perez-Diaz J.-C."/>
            <person name="Purcell R."/>
            <person name="Remmel B."/>
            <person name="Rose M."/>
            <person name="Schlueter T."/>
            <person name="Simoes N."/>
            <person name="Tierrez A."/>
            <person name="Vazquez-Boland J.-A."/>
            <person name="Voss H."/>
            <person name="Wehland J."/>
            <person name="Cossart P."/>
        </authorList>
    </citation>
    <scope>NUCLEOTIDE SEQUENCE [LARGE SCALE GENOMIC DNA]</scope>
    <source>
        <strain>ATCC BAA-680 / CLIP 11262</strain>
    </source>
</reference>
<keyword id="KW-0255">Endonuclease</keyword>
<keyword id="KW-0378">Hydrolase</keyword>
<keyword id="KW-0540">Nuclease</keyword>
<keyword id="KW-0694">RNA-binding</keyword>
<keyword id="KW-0819">tRNA processing</keyword>
<accession>Q926Q4</accession>
<feature type="chain" id="PRO_0000198478" description="Ribonuclease P protein component">
    <location>
        <begin position="1"/>
        <end position="119"/>
    </location>
</feature>